<feature type="chain" id="PRO_0000258758" description="Large ribosomal subunit protein bL35">
    <location>
        <begin position="1"/>
        <end position="66"/>
    </location>
</feature>
<feature type="region of interest" description="Disordered" evidence="2">
    <location>
        <begin position="1"/>
        <end position="49"/>
    </location>
</feature>
<feature type="compositionally biased region" description="Basic residues" evidence="2">
    <location>
        <begin position="1"/>
        <end position="16"/>
    </location>
</feature>
<feature type="compositionally biased region" description="Basic residues" evidence="2">
    <location>
        <begin position="38"/>
        <end position="49"/>
    </location>
</feature>
<gene>
    <name evidence="1" type="primary">rpmI</name>
    <name type="ordered locus">SAB1539c</name>
</gene>
<dbReference type="EMBL" id="AJ938182">
    <property type="protein sequence ID" value="CAI81228.1"/>
    <property type="molecule type" value="Genomic_DNA"/>
</dbReference>
<dbReference type="RefSeq" id="WP_001125540.1">
    <property type="nucleotide sequence ID" value="NC_007622.1"/>
</dbReference>
<dbReference type="PDB" id="6FXC">
    <property type="method" value="EM"/>
    <property type="resolution" value="6.76 A"/>
    <property type="chains" value="A3/B3=2-65"/>
</dbReference>
<dbReference type="PDBsum" id="6FXC"/>
<dbReference type="EMDB" id="EMD-0243"/>
<dbReference type="EMDB" id="EMD-3637"/>
<dbReference type="SMR" id="Q2YTB0"/>
<dbReference type="GeneID" id="98346041"/>
<dbReference type="KEGG" id="sab:SAB1539c"/>
<dbReference type="HOGENOM" id="CLU_169643_3_0_9"/>
<dbReference type="GO" id="GO:0022625">
    <property type="term" value="C:cytosolic large ribosomal subunit"/>
    <property type="evidence" value="ECO:0007669"/>
    <property type="project" value="TreeGrafter"/>
</dbReference>
<dbReference type="GO" id="GO:0003735">
    <property type="term" value="F:structural constituent of ribosome"/>
    <property type="evidence" value="ECO:0007669"/>
    <property type="project" value="InterPro"/>
</dbReference>
<dbReference type="GO" id="GO:0006412">
    <property type="term" value="P:translation"/>
    <property type="evidence" value="ECO:0007669"/>
    <property type="project" value="UniProtKB-UniRule"/>
</dbReference>
<dbReference type="FunFam" id="4.10.410.60:FF:000001">
    <property type="entry name" value="50S ribosomal protein L35"/>
    <property type="match status" value="1"/>
</dbReference>
<dbReference type="Gene3D" id="4.10.410.60">
    <property type="match status" value="1"/>
</dbReference>
<dbReference type="HAMAP" id="MF_00514">
    <property type="entry name" value="Ribosomal_bL35"/>
    <property type="match status" value="1"/>
</dbReference>
<dbReference type="InterPro" id="IPR001706">
    <property type="entry name" value="Ribosomal_bL35"/>
</dbReference>
<dbReference type="InterPro" id="IPR021137">
    <property type="entry name" value="Ribosomal_bL35-like"/>
</dbReference>
<dbReference type="InterPro" id="IPR018265">
    <property type="entry name" value="Ribosomal_bL35_CS"/>
</dbReference>
<dbReference type="InterPro" id="IPR037229">
    <property type="entry name" value="Ribosomal_bL35_sf"/>
</dbReference>
<dbReference type="NCBIfam" id="TIGR00001">
    <property type="entry name" value="rpmI_bact"/>
    <property type="match status" value="1"/>
</dbReference>
<dbReference type="PANTHER" id="PTHR33343">
    <property type="entry name" value="54S RIBOSOMAL PROTEIN BL35M"/>
    <property type="match status" value="1"/>
</dbReference>
<dbReference type="PANTHER" id="PTHR33343:SF1">
    <property type="entry name" value="LARGE RIBOSOMAL SUBUNIT PROTEIN BL35M"/>
    <property type="match status" value="1"/>
</dbReference>
<dbReference type="Pfam" id="PF01632">
    <property type="entry name" value="Ribosomal_L35p"/>
    <property type="match status" value="1"/>
</dbReference>
<dbReference type="PRINTS" id="PR00064">
    <property type="entry name" value="RIBOSOMALL35"/>
</dbReference>
<dbReference type="SUPFAM" id="SSF143034">
    <property type="entry name" value="L35p-like"/>
    <property type="match status" value="1"/>
</dbReference>
<dbReference type="PROSITE" id="PS00936">
    <property type="entry name" value="RIBOSOMAL_L35"/>
    <property type="match status" value="1"/>
</dbReference>
<accession>Q2YTB0</accession>
<comment type="similarity">
    <text evidence="1">Belongs to the bacterial ribosomal protein bL35 family.</text>
</comment>
<proteinExistence type="evidence at protein level"/>
<protein>
    <recommendedName>
        <fullName evidence="1">Large ribosomal subunit protein bL35</fullName>
    </recommendedName>
    <alternativeName>
        <fullName evidence="3">50S ribosomal protein L35</fullName>
    </alternativeName>
</protein>
<reference key="1">
    <citation type="journal article" date="2007" name="PLoS ONE">
        <title>Molecular correlates of host specialization in Staphylococcus aureus.</title>
        <authorList>
            <person name="Herron-Olson L."/>
            <person name="Fitzgerald J.R."/>
            <person name="Musser J.M."/>
            <person name="Kapur V."/>
        </authorList>
    </citation>
    <scope>NUCLEOTIDE SEQUENCE [LARGE SCALE GENOMIC DNA]</scope>
    <source>
        <strain>bovine RF122 / ET3-1</strain>
    </source>
</reference>
<keyword id="KW-0002">3D-structure</keyword>
<keyword id="KW-0687">Ribonucleoprotein</keyword>
<keyword id="KW-0689">Ribosomal protein</keyword>
<evidence type="ECO:0000255" key="1">
    <source>
        <dbReference type="HAMAP-Rule" id="MF_00514"/>
    </source>
</evidence>
<evidence type="ECO:0000256" key="2">
    <source>
        <dbReference type="SAM" id="MobiDB-lite"/>
    </source>
</evidence>
<evidence type="ECO:0000305" key="3"/>
<sequence>MPKMKTHRGAAKRVKRTASGQLKRSRAFTSHLFANKSTKQKRQLRKARLVSKSDMKRVKQLLAYKK</sequence>
<name>RL35_STAAB</name>
<organism>
    <name type="scientific">Staphylococcus aureus (strain bovine RF122 / ET3-1)</name>
    <dbReference type="NCBI Taxonomy" id="273036"/>
    <lineage>
        <taxon>Bacteria</taxon>
        <taxon>Bacillati</taxon>
        <taxon>Bacillota</taxon>
        <taxon>Bacilli</taxon>
        <taxon>Bacillales</taxon>
        <taxon>Staphylococcaceae</taxon>
        <taxon>Staphylococcus</taxon>
    </lineage>
</organism>